<proteinExistence type="inferred from homology"/>
<organism>
    <name type="scientific">Erwinia tasmaniensis (strain DSM 17950 / CFBP 7177 / CIP 109463 / NCPPB 4357 / Et1/99)</name>
    <dbReference type="NCBI Taxonomy" id="465817"/>
    <lineage>
        <taxon>Bacteria</taxon>
        <taxon>Pseudomonadati</taxon>
        <taxon>Pseudomonadota</taxon>
        <taxon>Gammaproteobacteria</taxon>
        <taxon>Enterobacterales</taxon>
        <taxon>Erwiniaceae</taxon>
        <taxon>Erwinia</taxon>
    </lineage>
</organism>
<reference key="1">
    <citation type="journal article" date="2008" name="Environ. Microbiol.">
        <title>The genome of Erwinia tasmaniensis strain Et1/99, a non-pathogenic bacterium in the genus Erwinia.</title>
        <authorList>
            <person name="Kube M."/>
            <person name="Migdoll A.M."/>
            <person name="Mueller I."/>
            <person name="Kuhl H."/>
            <person name="Beck A."/>
            <person name="Reinhardt R."/>
            <person name="Geider K."/>
        </authorList>
    </citation>
    <scope>NUCLEOTIDE SEQUENCE [LARGE SCALE GENOMIC DNA]</scope>
    <source>
        <strain>DSM 17950 / CFBP 7177 / CIP 109463 / NCPPB 4357 / Et1/99</strain>
    </source>
</reference>
<protein>
    <recommendedName>
        <fullName evidence="1">3-deoxy-manno-octulosonate cytidylyltransferase</fullName>
        <ecNumber evidence="1">2.7.7.38</ecNumber>
    </recommendedName>
    <alternativeName>
        <fullName evidence="1">CMP-2-keto-3-deoxyoctulosonic acid synthase</fullName>
        <shortName evidence="1">CKS</shortName>
        <shortName evidence="1">CMP-KDO synthase</shortName>
    </alternativeName>
</protein>
<comment type="function">
    <text evidence="1">Activates KDO (a required 8-carbon sugar) for incorporation into bacterial lipopolysaccharide in Gram-negative bacteria.</text>
</comment>
<comment type="catalytic activity">
    <reaction evidence="1">
        <text>3-deoxy-alpha-D-manno-oct-2-ulosonate + CTP = CMP-3-deoxy-beta-D-manno-octulosonate + diphosphate</text>
        <dbReference type="Rhea" id="RHEA:23448"/>
        <dbReference type="ChEBI" id="CHEBI:33019"/>
        <dbReference type="ChEBI" id="CHEBI:37563"/>
        <dbReference type="ChEBI" id="CHEBI:85986"/>
        <dbReference type="ChEBI" id="CHEBI:85987"/>
        <dbReference type="EC" id="2.7.7.38"/>
    </reaction>
</comment>
<comment type="pathway">
    <text evidence="1">Nucleotide-sugar biosynthesis; CMP-3-deoxy-D-manno-octulosonate biosynthesis; CMP-3-deoxy-D-manno-octulosonate from 3-deoxy-D-manno-octulosonate and CTP: step 1/1.</text>
</comment>
<comment type="pathway">
    <text evidence="1">Bacterial outer membrane biogenesis; lipopolysaccharide biosynthesis.</text>
</comment>
<comment type="subcellular location">
    <subcellularLocation>
        <location evidence="1">Cytoplasm</location>
    </subcellularLocation>
</comment>
<comment type="similarity">
    <text evidence="1">Belongs to the KdsB family.</text>
</comment>
<keyword id="KW-0963">Cytoplasm</keyword>
<keyword id="KW-0448">Lipopolysaccharide biosynthesis</keyword>
<keyword id="KW-0548">Nucleotidyltransferase</keyword>
<keyword id="KW-1185">Reference proteome</keyword>
<keyword id="KW-0808">Transferase</keyword>
<evidence type="ECO:0000255" key="1">
    <source>
        <dbReference type="HAMAP-Rule" id="MF_00057"/>
    </source>
</evidence>
<name>KDSB_ERWT9</name>
<feature type="chain" id="PRO_1000091872" description="3-deoxy-manno-octulosonate cytidylyltransferase">
    <location>
        <begin position="1"/>
        <end position="248"/>
    </location>
</feature>
<sequence>MSFVAIIPARFASTRLPGKPLVDIHGKPMVVHVMERALESGAERVIVATDHIDVAHAVEAAGGEVCMTRADHQSGTERLAEVIDHYQFPDDKVIVNVQGDEPMIPPVIIQQVAKNIAQRSVGMATLAVPVDSVEEAFNPNAVKVVRDAQGNALYFSRATIPWDRERFAVSQDSIGDNFLRHIGIYGYRAGFIRRYVRWEASPLEQIELLEQLRVLWYGEKIHVDVAQAIPSAGVDTAEDLQRVRAAMR</sequence>
<gene>
    <name evidence="1" type="primary">kdsB</name>
    <name type="ordered locus">ETA_21360</name>
</gene>
<accession>B2VC71</accession>
<dbReference type="EC" id="2.7.7.38" evidence="1"/>
<dbReference type="EMBL" id="CU468135">
    <property type="protein sequence ID" value="CAO97182.1"/>
    <property type="molecule type" value="Genomic_DNA"/>
</dbReference>
<dbReference type="RefSeq" id="WP_012441853.1">
    <property type="nucleotide sequence ID" value="NC_010694.1"/>
</dbReference>
<dbReference type="SMR" id="B2VC71"/>
<dbReference type="STRING" id="465817.ETA_21360"/>
<dbReference type="KEGG" id="eta:ETA_21360"/>
<dbReference type="eggNOG" id="COG1212">
    <property type="taxonomic scope" value="Bacteria"/>
</dbReference>
<dbReference type="HOGENOM" id="CLU_065038_1_0_6"/>
<dbReference type="OrthoDB" id="9815559at2"/>
<dbReference type="UniPathway" id="UPA00030"/>
<dbReference type="UniPathway" id="UPA00358">
    <property type="reaction ID" value="UER00476"/>
</dbReference>
<dbReference type="Proteomes" id="UP000001726">
    <property type="component" value="Chromosome"/>
</dbReference>
<dbReference type="GO" id="GO:0005829">
    <property type="term" value="C:cytosol"/>
    <property type="evidence" value="ECO:0007669"/>
    <property type="project" value="TreeGrafter"/>
</dbReference>
<dbReference type="GO" id="GO:0008690">
    <property type="term" value="F:3-deoxy-manno-octulosonate cytidylyltransferase activity"/>
    <property type="evidence" value="ECO:0007669"/>
    <property type="project" value="UniProtKB-UniRule"/>
</dbReference>
<dbReference type="GO" id="GO:0033468">
    <property type="term" value="P:CMP-keto-3-deoxy-D-manno-octulosonic acid biosynthetic process"/>
    <property type="evidence" value="ECO:0007669"/>
    <property type="project" value="UniProtKB-UniRule"/>
</dbReference>
<dbReference type="GO" id="GO:0009103">
    <property type="term" value="P:lipopolysaccharide biosynthetic process"/>
    <property type="evidence" value="ECO:0007669"/>
    <property type="project" value="UniProtKB-UniRule"/>
</dbReference>
<dbReference type="CDD" id="cd02517">
    <property type="entry name" value="CMP-KDO-Synthetase"/>
    <property type="match status" value="1"/>
</dbReference>
<dbReference type="FunFam" id="3.90.550.10:FF:000011">
    <property type="entry name" value="3-deoxy-manno-octulosonate cytidylyltransferase"/>
    <property type="match status" value="1"/>
</dbReference>
<dbReference type="Gene3D" id="3.90.550.10">
    <property type="entry name" value="Spore Coat Polysaccharide Biosynthesis Protein SpsA, Chain A"/>
    <property type="match status" value="1"/>
</dbReference>
<dbReference type="HAMAP" id="MF_00057">
    <property type="entry name" value="KdsB"/>
    <property type="match status" value="1"/>
</dbReference>
<dbReference type="InterPro" id="IPR003329">
    <property type="entry name" value="Cytidylyl_trans"/>
</dbReference>
<dbReference type="InterPro" id="IPR004528">
    <property type="entry name" value="KdsB"/>
</dbReference>
<dbReference type="InterPro" id="IPR029044">
    <property type="entry name" value="Nucleotide-diphossugar_trans"/>
</dbReference>
<dbReference type="NCBIfam" id="TIGR00466">
    <property type="entry name" value="kdsB"/>
    <property type="match status" value="1"/>
</dbReference>
<dbReference type="NCBIfam" id="NF003950">
    <property type="entry name" value="PRK05450.1-3"/>
    <property type="match status" value="1"/>
</dbReference>
<dbReference type="NCBIfam" id="NF003952">
    <property type="entry name" value="PRK05450.1-5"/>
    <property type="match status" value="1"/>
</dbReference>
<dbReference type="NCBIfam" id="NF009905">
    <property type="entry name" value="PRK13368.1"/>
    <property type="match status" value="1"/>
</dbReference>
<dbReference type="PANTHER" id="PTHR42866">
    <property type="entry name" value="3-DEOXY-MANNO-OCTULOSONATE CYTIDYLYLTRANSFERASE"/>
    <property type="match status" value="1"/>
</dbReference>
<dbReference type="PANTHER" id="PTHR42866:SF2">
    <property type="entry name" value="3-DEOXY-MANNO-OCTULOSONATE CYTIDYLYLTRANSFERASE, MITOCHONDRIAL"/>
    <property type="match status" value="1"/>
</dbReference>
<dbReference type="Pfam" id="PF02348">
    <property type="entry name" value="CTP_transf_3"/>
    <property type="match status" value="1"/>
</dbReference>
<dbReference type="SUPFAM" id="SSF53448">
    <property type="entry name" value="Nucleotide-diphospho-sugar transferases"/>
    <property type="match status" value="1"/>
</dbReference>